<protein>
    <recommendedName>
        <fullName evidence="15">Lanosterol 14-alpha demethylase CYP51</fullName>
        <ecNumber evidence="1 9 17">1.14.14.154</ecNumber>
    </recommendedName>
    <alternativeName>
        <fullName evidence="16">Cytochrome P450 51</fullName>
    </alternativeName>
    <alternativeName>
        <fullName evidence="11 14">Cytochrome P450-14DM</fullName>
    </alternativeName>
    <alternativeName>
        <fullName evidence="13">Cytochrome P450-LIA1</fullName>
        <shortName evidence="13">CYPLI</shortName>
    </alternativeName>
    <alternativeName>
        <fullName evidence="10">Ergosterol biosynthetic protein 11</fullName>
    </alternativeName>
    <alternativeName>
        <fullName evidence="14">Lanosterol C14-C32 lyase</fullName>
    </alternativeName>
    <alternativeName>
        <fullName evidence="16">Sterol 14-alpha demethylase</fullName>
    </alternativeName>
</protein>
<name>CP51_YEAST</name>
<organism>
    <name type="scientific">Saccharomyces cerevisiae (strain ATCC 204508 / S288c)</name>
    <name type="common">Baker's yeast</name>
    <dbReference type="NCBI Taxonomy" id="559292"/>
    <lineage>
        <taxon>Eukaryota</taxon>
        <taxon>Fungi</taxon>
        <taxon>Dikarya</taxon>
        <taxon>Ascomycota</taxon>
        <taxon>Saccharomycotina</taxon>
        <taxon>Saccharomycetes</taxon>
        <taxon>Saccharomycetales</taxon>
        <taxon>Saccharomycetaceae</taxon>
        <taxon>Saccharomyces</taxon>
    </lineage>
</organism>
<feature type="chain" id="PRO_0000052012" description="Lanosterol 14-alpha demethylase CYP51">
    <location>
        <begin position="1"/>
        <end position="530"/>
    </location>
</feature>
<feature type="topological domain" description="Lumenal" evidence="4 7">
    <location>
        <begin position="1"/>
        <end position="20"/>
    </location>
</feature>
<feature type="transmembrane region" description="Helical" evidence="4 7">
    <location>
        <begin position="21"/>
        <end position="41"/>
    </location>
</feature>
<feature type="topological domain" description="Cytoplasmic" evidence="4 7">
    <location>
        <begin position="42"/>
        <end position="530"/>
    </location>
</feature>
<feature type="binding site" evidence="7 18">
    <location>
        <position position="126"/>
    </location>
    <ligand>
        <name>lanosterol</name>
        <dbReference type="ChEBI" id="CHEBI:16521"/>
    </ligand>
</feature>
<feature type="binding site" evidence="7 19">
    <location>
        <position position="314"/>
    </location>
    <ligand>
        <name>itraconazole</name>
        <dbReference type="ChEBI" id="CHEBI:6076"/>
    </ligand>
</feature>
<feature type="binding site" description="axial binding residue" evidence="7 18 19">
    <location>
        <position position="470"/>
    </location>
    <ligand>
        <name>heme</name>
        <dbReference type="ChEBI" id="CHEBI:30413"/>
    </ligand>
    <ligandPart>
        <name>Fe</name>
        <dbReference type="ChEBI" id="CHEBI:18248"/>
    </ligandPart>
</feature>
<feature type="modified residue" description="Phosphoserine" evidence="20">
    <location>
        <position position="458"/>
    </location>
</feature>
<feature type="cross-link" description="Glycyl lysine isopeptide (Lys-Gly) (interchain with G-Cter in ubiquitin)" evidence="21">
    <location>
        <position position="116"/>
    </location>
</feature>
<feature type="cross-link" description="Glycyl lysine isopeptide (Lys-Gly) (interchain with G-Cter in ubiquitin)" evidence="21">
    <location>
        <position position="353"/>
    </location>
</feature>
<feature type="cross-link" description="Glycyl lysine isopeptide (Lys-Gly) (interchain with G-Cter in ubiquitin)" evidence="21">
    <location>
        <position position="454"/>
    </location>
</feature>
<feature type="sequence conflict" description="In Ref. 2; AAA34546/AAA34547." evidence="16" ref="2">
    <original>K</original>
    <variation>N</variation>
    <location>
        <position position="433"/>
    </location>
</feature>
<feature type="helix" evidence="22">
    <location>
        <begin position="9"/>
        <end position="23"/>
    </location>
</feature>
<feature type="helix" evidence="22">
    <location>
        <begin position="27"/>
        <end position="49"/>
    </location>
</feature>
<feature type="strand" evidence="22">
    <location>
        <begin position="53"/>
        <end position="55"/>
    </location>
</feature>
<feature type="turn" evidence="22">
    <location>
        <begin position="64"/>
        <end position="66"/>
    </location>
</feature>
<feature type="helix" evidence="22">
    <location>
        <begin position="69"/>
        <end position="74"/>
    </location>
</feature>
<feature type="helix" evidence="22">
    <location>
        <begin position="76"/>
        <end position="87"/>
    </location>
</feature>
<feature type="strand" evidence="22">
    <location>
        <begin position="89"/>
        <end position="95"/>
    </location>
</feature>
<feature type="strand" evidence="22">
    <location>
        <begin position="98"/>
        <end position="103"/>
    </location>
</feature>
<feature type="helix" evidence="22">
    <location>
        <begin position="105"/>
        <end position="113"/>
    </location>
</feature>
<feature type="turn" evidence="22">
    <location>
        <begin position="117"/>
        <end position="119"/>
    </location>
</feature>
<feature type="helix" evidence="22">
    <location>
        <begin position="122"/>
        <end position="134"/>
    </location>
</feature>
<feature type="strand" evidence="24">
    <location>
        <begin position="136"/>
        <end position="138"/>
    </location>
</feature>
<feature type="helix" evidence="22">
    <location>
        <begin position="144"/>
        <end position="155"/>
    </location>
</feature>
<feature type="helix" evidence="22">
    <location>
        <begin position="160"/>
        <end position="180"/>
    </location>
</feature>
<feature type="turn" evidence="22">
    <location>
        <begin position="182"/>
        <end position="184"/>
    </location>
</feature>
<feature type="turn" evidence="22">
    <location>
        <begin position="186"/>
        <end position="188"/>
    </location>
</feature>
<feature type="strand" evidence="22">
    <location>
        <begin position="190"/>
        <end position="195"/>
    </location>
</feature>
<feature type="helix" evidence="22">
    <location>
        <begin position="196"/>
        <end position="212"/>
    </location>
</feature>
<feature type="helix" evidence="22">
    <location>
        <begin position="215"/>
        <end position="220"/>
    </location>
</feature>
<feature type="helix" evidence="22">
    <location>
        <begin position="225"/>
        <end position="234"/>
    </location>
</feature>
<feature type="helix" evidence="22">
    <location>
        <begin position="238"/>
        <end position="242"/>
    </location>
</feature>
<feature type="strand" evidence="23">
    <location>
        <begin position="243"/>
        <end position="245"/>
    </location>
</feature>
<feature type="helix" evidence="22">
    <location>
        <begin position="249"/>
        <end position="274"/>
    </location>
</feature>
<feature type="strand" evidence="22">
    <location>
        <begin position="280"/>
        <end position="282"/>
    </location>
</feature>
<feature type="helix" evidence="22">
    <location>
        <begin position="283"/>
        <end position="289"/>
    </location>
</feature>
<feature type="helix" evidence="22">
    <location>
        <begin position="301"/>
        <end position="331"/>
    </location>
</feature>
<feature type="helix" evidence="22">
    <location>
        <begin position="334"/>
        <end position="347"/>
    </location>
</feature>
<feature type="helix" evidence="22">
    <location>
        <begin position="349"/>
        <end position="351"/>
    </location>
</feature>
<feature type="helix" evidence="22">
    <location>
        <begin position="357"/>
        <end position="360"/>
    </location>
</feature>
<feature type="helix" evidence="22">
    <location>
        <begin position="364"/>
        <end position="376"/>
    </location>
</feature>
<feature type="strand" evidence="22">
    <location>
        <begin position="383"/>
        <end position="387"/>
    </location>
</feature>
<feature type="strand" evidence="23">
    <location>
        <begin position="394"/>
        <end position="397"/>
    </location>
</feature>
<feature type="strand" evidence="22">
    <location>
        <begin position="405"/>
        <end position="408"/>
    </location>
</feature>
<feature type="helix" evidence="22">
    <location>
        <begin position="410"/>
        <end position="413"/>
    </location>
</feature>
<feature type="turn" evidence="22">
    <location>
        <begin position="417"/>
        <end position="419"/>
    </location>
</feature>
<feature type="turn" evidence="22">
    <location>
        <begin position="421"/>
        <end position="424"/>
    </location>
</feature>
<feature type="helix" evidence="22">
    <location>
        <begin position="428"/>
        <end position="431"/>
    </location>
</feature>
<feature type="strand" evidence="22">
    <location>
        <begin position="444"/>
        <end position="449"/>
    </location>
</feature>
<feature type="strand" evidence="22">
    <location>
        <begin position="451"/>
        <end position="454"/>
    </location>
</feature>
<feature type="helix" evidence="22">
    <location>
        <begin position="466"/>
        <end position="468"/>
    </location>
</feature>
<feature type="helix" evidence="22">
    <location>
        <begin position="473"/>
        <end position="490"/>
    </location>
</feature>
<feature type="strand" evidence="22">
    <location>
        <begin position="491"/>
        <end position="494"/>
    </location>
</feature>
<feature type="strand" evidence="22">
    <location>
        <begin position="507"/>
        <end position="510"/>
    </location>
</feature>
<feature type="strand" evidence="22">
    <location>
        <begin position="518"/>
        <end position="525"/>
    </location>
</feature>
<evidence type="ECO:0000269" key="1">
    <source>
    </source>
</evidence>
<evidence type="ECO:0000269" key="2">
    <source>
    </source>
</evidence>
<evidence type="ECO:0000269" key="3">
    <source>
    </source>
</evidence>
<evidence type="ECO:0000269" key="4">
    <source>
    </source>
</evidence>
<evidence type="ECO:0000269" key="5">
    <source>
    </source>
</evidence>
<evidence type="ECO:0000269" key="6">
    <source>
    </source>
</evidence>
<evidence type="ECO:0000269" key="7">
    <source>
    </source>
</evidence>
<evidence type="ECO:0000269" key="8">
    <source>
    </source>
</evidence>
<evidence type="ECO:0000269" key="9">
    <source>
    </source>
</evidence>
<evidence type="ECO:0000303" key="10">
    <source>
    </source>
</evidence>
<evidence type="ECO:0000303" key="11">
    <source>
    </source>
</evidence>
<evidence type="ECO:0000303" key="12">
    <source>
    </source>
</evidence>
<evidence type="ECO:0000303" key="13">
    <source>
    </source>
</evidence>
<evidence type="ECO:0000303" key="14">
    <source>
    </source>
</evidence>
<evidence type="ECO:0000303" key="15">
    <source>
    </source>
</evidence>
<evidence type="ECO:0000305" key="16"/>
<evidence type="ECO:0000305" key="17">
    <source>
    </source>
</evidence>
<evidence type="ECO:0007744" key="18">
    <source>
        <dbReference type="PDB" id="4LXJ"/>
    </source>
</evidence>
<evidence type="ECO:0007744" key="19">
    <source>
        <dbReference type="PDB" id="5EQB"/>
    </source>
</evidence>
<evidence type="ECO:0007744" key="20">
    <source>
    </source>
</evidence>
<evidence type="ECO:0007744" key="21">
    <source>
    </source>
</evidence>
<evidence type="ECO:0007829" key="22">
    <source>
        <dbReference type="PDB" id="4LXJ"/>
    </source>
</evidence>
<evidence type="ECO:0007829" key="23">
    <source>
        <dbReference type="PDB" id="7RYB"/>
    </source>
</evidence>
<evidence type="ECO:0007829" key="24">
    <source>
        <dbReference type="PDB" id="7RYX"/>
    </source>
</evidence>
<reference key="1">
    <citation type="journal article" date="1987" name="DNA">
        <title>Primary structure of the P450 lanosterol demethylase gene from Saccharomyces cerevisiae.</title>
        <authorList>
            <person name="Kalb V.F."/>
            <person name="Woods C.W."/>
            <person name="Turi T.G."/>
            <person name="Dey C.R."/>
            <person name="Sutter T.R."/>
            <person name="Loper J.C."/>
        </authorList>
    </citation>
    <scope>NUCLEOTIDE SEQUENCE [GENOMIC DNA]</scope>
</reference>
<reference key="2">
    <citation type="journal article" date="1988" name="Biochem. Biophys. Res. Commun.">
        <title>A single amino acid substitution converts cytochrome P450(14DM) to an inactive form, cytochrome P450SG1: complete primary structures deduced from cloned DNAS.</title>
        <authorList>
            <person name="Ishida N."/>
            <person name="Aoyama Y."/>
            <person name="Hatanaka R."/>
            <person name="Oyama Y."/>
            <person name="Imajo S."/>
            <person name="Ishiguro M."/>
            <person name="Oshima T."/>
            <person name="Nakazato H."/>
            <person name="Noguchi T."/>
            <person name="Maitra U.S."/>
            <person name="Mohan V.P."/>
            <person name="Sprinson D.B."/>
            <person name="Yoshida Y."/>
        </authorList>
    </citation>
    <scope>NUCLEOTIDE SEQUENCE [GENOMIC DNA]</scope>
</reference>
<reference key="3">
    <citation type="journal article" date="1994" name="Science">
        <title>Complete nucleotide sequence of Saccharomyces cerevisiae chromosome VIII.</title>
        <authorList>
            <person name="Johnston M."/>
            <person name="Andrews S."/>
            <person name="Brinkman R."/>
            <person name="Cooper J."/>
            <person name="Ding H."/>
            <person name="Dover J."/>
            <person name="Du Z."/>
            <person name="Favello A."/>
            <person name="Fulton L."/>
            <person name="Gattung S."/>
            <person name="Geisel C."/>
            <person name="Kirsten J."/>
            <person name="Kucaba T."/>
            <person name="Hillier L.W."/>
            <person name="Jier M."/>
            <person name="Johnston L."/>
            <person name="Langston Y."/>
            <person name="Latreille P."/>
            <person name="Louis E.J."/>
            <person name="Macri C."/>
            <person name="Mardis E."/>
            <person name="Menezes S."/>
            <person name="Mouser L."/>
            <person name="Nhan M."/>
            <person name="Rifkin L."/>
            <person name="Riles L."/>
            <person name="St Peter H."/>
            <person name="Trevaskis E."/>
            <person name="Vaughan K."/>
            <person name="Vignati D."/>
            <person name="Wilcox L."/>
            <person name="Wohldman P."/>
            <person name="Waterston R."/>
            <person name="Wilson R."/>
            <person name="Vaudin M."/>
        </authorList>
    </citation>
    <scope>NUCLEOTIDE SEQUENCE [LARGE SCALE GENOMIC DNA]</scope>
    <source>
        <strain>ATCC 204508 / S288c</strain>
    </source>
</reference>
<reference key="4">
    <citation type="journal article" date="2014" name="G3 (Bethesda)">
        <title>The reference genome sequence of Saccharomyces cerevisiae: Then and now.</title>
        <authorList>
            <person name="Engel S.R."/>
            <person name="Dietrich F.S."/>
            <person name="Fisk D.G."/>
            <person name="Binkley G."/>
            <person name="Balakrishnan R."/>
            <person name="Costanzo M.C."/>
            <person name="Dwight S.S."/>
            <person name="Hitz B.C."/>
            <person name="Karra K."/>
            <person name="Nash R.S."/>
            <person name="Weng S."/>
            <person name="Wong E.D."/>
            <person name="Lloyd P."/>
            <person name="Skrzypek M.S."/>
            <person name="Miyasato S.R."/>
            <person name="Simison M."/>
            <person name="Cherry J.M."/>
        </authorList>
    </citation>
    <scope>GENOME REANNOTATION</scope>
    <source>
        <strain>ATCC 204508 / S288c</strain>
    </source>
</reference>
<reference key="5">
    <citation type="journal article" date="1986" name="Gene">
        <title>Isolation of a cytochrome P-450 structural gene from Saccharomyces cerevisiae.</title>
        <authorList>
            <person name="Kalb V.F."/>
            <person name="Loper J.C."/>
            <person name="Dey C.R."/>
            <person name="Woods C.W."/>
            <person name="Sutter T.R."/>
        </authorList>
    </citation>
    <scope>NUCLEOTIDE SEQUENCE [GENOMIC DNA] OF 444-528</scope>
</reference>
<reference key="6">
    <citation type="journal article" date="1978" name="Biochem. Biophys. Res. Commun.">
        <title>Involvement of cytochrome P-450 and a cyanide-sensitive enzyme in different steps of lanosterol demethylation by yeast microsomes.</title>
        <authorList>
            <person name="Ohba M."/>
            <person name="Sato R."/>
            <person name="Yoshida Y."/>
            <person name="Nishino T."/>
            <person name="Katsuki H."/>
        </authorList>
    </citation>
    <scope>FUNCTION</scope>
    <scope>CATALYTIC ACTIVITY</scope>
    <scope>PATHWAY</scope>
</reference>
<reference key="7">
    <citation type="journal article" date="1978" name="Biochem. Biophys. Res. Commun.">
        <title>The 14alpha-demethylation of lanosterol by a reconstituted cytochrome P-450 system from yeast microsomes.</title>
        <authorList>
            <person name="Aoyama Y."/>
            <person name="Yoshida Y."/>
        </authorList>
    </citation>
    <scope>FUNCTION</scope>
    <scope>CATALYTIC ACTIVITY</scope>
    <scope>PATHWAY</scope>
</reference>
<reference key="8">
    <citation type="journal article" date="1987" name="J. Biol. Chem.">
        <title>Metabolism of 32-hydroxy-24,25-dihydrolanosterol by purified cytochrome P-45014DM from yeast. Evidence for contribution of the cytochrome to whole process of lanosterol 14 alpha-demethylation.</title>
        <authorList>
            <person name="Aoyama Y."/>
            <person name="Yoshida Y."/>
            <person name="Sonoda Y."/>
            <person name="Sato Y."/>
        </authorList>
    </citation>
    <scope>FUNCTION</scope>
    <scope>CATALYTIC ACTIVITY</scope>
    <scope>BIOPHYSICOCHEMICAL PROPERTIES</scope>
</reference>
<reference key="9">
    <citation type="journal article" date="1991" name="Biochem. Biophys. Res. Commun.">
        <title>Different substrate specificities of lanosterol 14a-demethylase (P-45014DM) of Saccharomyces cerevisiae and rat liver for 24-methylene-24,25-dihydrolanosterol and 24,25-dihydrolanosterol.</title>
        <authorList>
            <person name="Aoyama Y."/>
            <person name="Yoshida Y."/>
        </authorList>
    </citation>
    <scope>FUNCTION</scope>
    <scope>CATALYTIC ACTIVITY</scope>
    <scope>BIOPHYSICOCHEMICAL PROPERTIES</scope>
</reference>
<reference key="10">
    <citation type="journal article" date="1992" name="J. Biol. Chem.">
        <title>Multiple regulatory elements control expression of the gene encoding the Saccharomyces cerevisiae cytochrome P450, lanosterol 14 alpha-demethylase (ERG11).</title>
        <authorList>
            <person name="Turi T.G."/>
            <person name="Loper J.C."/>
        </authorList>
    </citation>
    <scope>INDUCTION</scope>
</reference>
<reference key="11">
    <citation type="journal article" date="2003" name="Nature">
        <title>Global analysis of protein expression in yeast.</title>
        <authorList>
            <person name="Ghaemmaghami S."/>
            <person name="Huh W.-K."/>
            <person name="Bower K."/>
            <person name="Howson R.W."/>
            <person name="Belle A."/>
            <person name="Dephoure N."/>
            <person name="O'Shea E.K."/>
            <person name="Weissman J.S."/>
        </authorList>
    </citation>
    <scope>LEVEL OF PROTEIN EXPRESSION [LARGE SCALE ANALYSIS]</scope>
</reference>
<reference key="12">
    <citation type="journal article" date="2005" name="J. Lipid Res.">
        <title>Erg28p is a key protein in the yeast sterol biosynthetic enzyme complex.</title>
        <authorList>
            <person name="Mo C."/>
            <person name="Bard M."/>
        </authorList>
    </citation>
    <scope>FUNCTION</scope>
    <scope>INTERACTION WITH ERG28</scope>
</reference>
<reference key="13">
    <citation type="journal article" date="2006" name="Proc. Natl. Acad. Sci. U.S.A.">
        <title>A global topology map of the Saccharomyces cerevisiae membrane proteome.</title>
        <authorList>
            <person name="Kim H."/>
            <person name="Melen K."/>
            <person name="Oesterberg M."/>
            <person name="von Heijne G."/>
        </authorList>
    </citation>
    <scope>TOPOLOGY [LARGE SCALE ANALYSIS]</scope>
</reference>
<reference key="14">
    <citation type="journal article" date="2007" name="J. Proteome Res.">
        <title>Large-scale phosphorylation analysis of alpha-factor-arrested Saccharomyces cerevisiae.</title>
        <authorList>
            <person name="Li X."/>
            <person name="Gerber S.A."/>
            <person name="Rudner A.D."/>
            <person name="Beausoleil S.A."/>
            <person name="Haas W."/>
            <person name="Villen J."/>
            <person name="Elias J.E."/>
            <person name="Gygi S.P."/>
        </authorList>
    </citation>
    <scope>PHOSPHORYLATION [LARGE SCALE ANALYSIS] AT SER-458</scope>
    <scope>IDENTIFICATION BY MASS SPECTROMETRY [LARGE SCALE ANALYSIS]</scope>
</reference>
<reference key="15">
    <citation type="journal article" date="2012" name="Proteomics">
        <title>Sites of ubiquitin attachment in Saccharomyces cerevisiae.</title>
        <authorList>
            <person name="Starita L.M."/>
            <person name="Lo R.S."/>
            <person name="Eng J.K."/>
            <person name="von Haller P.D."/>
            <person name="Fields S."/>
        </authorList>
    </citation>
    <scope>UBIQUITINATION [LARGE SCALE ANALYSIS] AT LYS-116; LYS-353 AND LYS-454</scope>
    <scope>IDENTIFICATION BY MASS SPECTROMETRY [LARGE SCALE ANALYSIS]</scope>
</reference>
<reference key="16">
    <citation type="journal article" date="2020" name="Genes (Basel)">
        <title>Regulation of ergosterol biosynthesis in Saccharomyces cerevisiae.</title>
        <authorList>
            <person name="Jorda T."/>
            <person name="Puig S."/>
        </authorList>
    </citation>
    <scope>REVIEW ON ERGOSTEROL BIOSYNTHESIS</scope>
</reference>
<reference evidence="18 19" key="17">
    <citation type="journal article" date="2014" name="Proc. Natl. Acad. Sci. U.S.A.">
        <title>Architecture of a single membrane spanning cytochrome P450 suggests constraints that orient the catalytic domain relative to a bilayer.</title>
        <authorList>
            <person name="Monk B.C."/>
            <person name="Tomasiak T.M."/>
            <person name="Keniya M.V."/>
            <person name="Huschmann F.U."/>
            <person name="Tyndall J.D."/>
            <person name="O'Connell J.D. III"/>
            <person name="Cannon R.D."/>
            <person name="McDonald J.G."/>
            <person name="Rodriguez A."/>
            <person name="Finer-Moore J.S."/>
            <person name="Stroud R.M."/>
        </authorList>
    </citation>
    <scope>X-RAY CRYSTALLOGRAPHY (1.90 ANGSTROMS) IN COMPLEX WITH HEME</scope>
    <scope>SUBCELLULAR LOCATION</scope>
    <scope>TOPOLOGY</scope>
</reference>
<sequence>MSATKSIVGEALEYVNIGLSHFLALPLAQRISLIIIIPFIYNIVWQLLYSLRKDRPPLVFYWIPWVGSAVVYGMKPYEFFEECQKKYGDIFSFVLLGRVMTVYLGPKGHEFVFNAKLADVSAEAAYAHLTTPVFGKGVIYDCPNSRLMEQKKFVKGALTKEAFKSYVPLIAEEVYKYFRDSKNFRLNERTTGTIDVMVTQPEMTIFTASRSLLGKEMRAKLDTDFAYLYSDLDKGFTPINFVFPNLPLEHYRKRDHAQKAISGTYMSLIKERRKNNDIQDRDLIDSLMKNSTYKDGVKMTDQEIANLLIGVLMGGQHTSAATSAWILLHLAERPDVQQELYEEQMRVLDGGKKELTYDLLQEMPLLNQTIKETLRMHHPLHSLFRKVMKDMHVPNTSYVIPAGYHVLVSPGYTHLRDEYFPNAHQFNIHRWNKDSASSYSVGEEVDYGFGAISKGVSSPYLPFGGGRHRCIGEHFAYCQLGVLMSIFIRTLKWHYPEGKTVPPPDFTSMVTLPTGPAKIIWEKRNPEQKI</sequence>
<comment type="function">
    <text evidence="1 6 8 9 12">Sterol 14alpha-demethylase that plays a critical role in the third module of ergosterol biosynthesis pathway, being ergosterol the major sterol component in fungal membranes that participates in a variety of functions (PubMed:105731, PubMed:369554). The third module or late pathway involves the ergosterol synthesis itself through consecutive reactions that mainly occur in the endoplasmic reticulum (ER) membrane (PubMed:32679672). Starting from lanosterol (lanosta-8,24-dien-3beta-ol), it catalyzes the three-step oxidative removal of the 14alpha-methyl group (C-32) of the sterol in the form of formate, and converts the sterol to 4,4-dimethyl-5alpha-cholesta-8,14,24-trien-3beta-ol, which is critical for ergosterol biosynthesis (PubMed:105731, PubMed:3543000, PubMed:369554). Can demethylate substrates not intrinsic to yeast, such as eburicol (24-methylene-24,25-dihydrolanosterol) at a similar rate to lanosterol, and at a lower rate the 24,25-dihydrolanosterol (DHL) to 4,4-dimethyl-8,14-cholestadien-3beta-ol (PubMed:1872829, PubMed:3543000).</text>
</comment>
<comment type="catalytic activity">
    <reaction evidence="1 6 8 9">
        <text>a 14alpha-methyl steroid + 3 reduced [NADPH--hemoprotein reductase] + 3 O2 = a Delta(14) steroid + formate + 3 oxidized [NADPH--hemoprotein reductase] + 4 H2O + 4 H(+)</text>
        <dbReference type="Rhea" id="RHEA:54028"/>
        <dbReference type="Rhea" id="RHEA-COMP:11964"/>
        <dbReference type="Rhea" id="RHEA-COMP:11965"/>
        <dbReference type="ChEBI" id="CHEBI:15377"/>
        <dbReference type="ChEBI" id="CHEBI:15378"/>
        <dbReference type="ChEBI" id="CHEBI:15379"/>
        <dbReference type="ChEBI" id="CHEBI:15740"/>
        <dbReference type="ChEBI" id="CHEBI:57618"/>
        <dbReference type="ChEBI" id="CHEBI:58210"/>
        <dbReference type="ChEBI" id="CHEBI:138029"/>
        <dbReference type="ChEBI" id="CHEBI:138031"/>
        <dbReference type="EC" id="1.14.14.154"/>
    </reaction>
    <physiologicalReaction direction="left-to-right" evidence="1 6 8 9">
        <dbReference type="Rhea" id="RHEA:54029"/>
    </physiologicalReaction>
</comment>
<comment type="catalytic activity">
    <reaction evidence="8">
        <text>a 14alpha-methyl steroid + reduced [NADPH--hemoprotein reductase] + O2 = a 14alpha-hydroxymethyl steroid + oxidized [NADPH--hemoprotein reductase] + H2O + H(+)</text>
        <dbReference type="Rhea" id="RHEA:68060"/>
        <dbReference type="Rhea" id="RHEA-COMP:11964"/>
        <dbReference type="Rhea" id="RHEA-COMP:11965"/>
        <dbReference type="ChEBI" id="CHEBI:15377"/>
        <dbReference type="ChEBI" id="CHEBI:15378"/>
        <dbReference type="ChEBI" id="CHEBI:15379"/>
        <dbReference type="ChEBI" id="CHEBI:57618"/>
        <dbReference type="ChEBI" id="CHEBI:58210"/>
        <dbReference type="ChEBI" id="CHEBI:138029"/>
        <dbReference type="ChEBI" id="CHEBI:176901"/>
    </reaction>
    <physiologicalReaction direction="left-to-right" evidence="8">
        <dbReference type="Rhea" id="RHEA:68061"/>
    </physiologicalReaction>
</comment>
<comment type="catalytic activity">
    <reaction evidence="8">
        <text>a 14alpha-hydroxymethyl steroid + reduced [NADPH--hemoprotein reductase] + O2 = a 14alpha-formyl steroid + oxidized [NADPH--hemoprotein reductase] + 2 H2O + H(+)</text>
        <dbReference type="Rhea" id="RHEA:68064"/>
        <dbReference type="Rhea" id="RHEA-COMP:11964"/>
        <dbReference type="Rhea" id="RHEA-COMP:11965"/>
        <dbReference type="ChEBI" id="CHEBI:15377"/>
        <dbReference type="ChEBI" id="CHEBI:15378"/>
        <dbReference type="ChEBI" id="CHEBI:15379"/>
        <dbReference type="ChEBI" id="CHEBI:57618"/>
        <dbReference type="ChEBI" id="CHEBI:58210"/>
        <dbReference type="ChEBI" id="CHEBI:176901"/>
        <dbReference type="ChEBI" id="CHEBI:176902"/>
    </reaction>
    <physiologicalReaction direction="left-to-right" evidence="8">
        <dbReference type="Rhea" id="RHEA:68065"/>
    </physiologicalReaction>
</comment>
<comment type="catalytic activity">
    <reaction evidence="8">
        <text>a 14alpha-formyl steroid + reduced [NADPH--hemoprotein reductase] + O2 = a Delta(14) steroid + formate + oxidized [NADPH--hemoprotein reductase] + H2O + 2 H(+)</text>
        <dbReference type="Rhea" id="RHEA:68068"/>
        <dbReference type="Rhea" id="RHEA-COMP:11964"/>
        <dbReference type="Rhea" id="RHEA-COMP:11965"/>
        <dbReference type="ChEBI" id="CHEBI:15377"/>
        <dbReference type="ChEBI" id="CHEBI:15378"/>
        <dbReference type="ChEBI" id="CHEBI:15379"/>
        <dbReference type="ChEBI" id="CHEBI:15740"/>
        <dbReference type="ChEBI" id="CHEBI:57618"/>
        <dbReference type="ChEBI" id="CHEBI:58210"/>
        <dbReference type="ChEBI" id="CHEBI:138031"/>
        <dbReference type="ChEBI" id="CHEBI:176902"/>
    </reaction>
    <physiologicalReaction direction="left-to-right" evidence="8">
        <dbReference type="Rhea" id="RHEA:68069"/>
    </physiologicalReaction>
</comment>
<comment type="catalytic activity">
    <reaction evidence="1 6 9 17">
        <text>lanosterol + 3 reduced [NADPH--hemoprotein reductase] + 3 O2 = 4,4-dimethyl-5alpha-cholesta-8,14,24-trien-3beta-ol + formate + 3 oxidized [NADPH--hemoprotein reductase] + 4 H2O + 4 H(+)</text>
        <dbReference type="Rhea" id="RHEA:25286"/>
        <dbReference type="Rhea" id="RHEA-COMP:11964"/>
        <dbReference type="Rhea" id="RHEA-COMP:11965"/>
        <dbReference type="ChEBI" id="CHEBI:15377"/>
        <dbReference type="ChEBI" id="CHEBI:15378"/>
        <dbReference type="ChEBI" id="CHEBI:15379"/>
        <dbReference type="ChEBI" id="CHEBI:15740"/>
        <dbReference type="ChEBI" id="CHEBI:16521"/>
        <dbReference type="ChEBI" id="CHEBI:17813"/>
        <dbReference type="ChEBI" id="CHEBI:57618"/>
        <dbReference type="ChEBI" id="CHEBI:58210"/>
        <dbReference type="EC" id="1.14.14.154"/>
    </reaction>
    <physiologicalReaction direction="left-to-right" evidence="1 6 9 17">
        <dbReference type="Rhea" id="RHEA:25287"/>
    </physiologicalReaction>
</comment>
<comment type="catalytic activity">
    <reaction evidence="17">
        <text>lanosterol + reduced [NADPH--hemoprotein reductase] + O2 = 32-hydroxylanosterol + oxidized [NADPH--hemoprotein reductase] + H2O + H(+)</text>
        <dbReference type="Rhea" id="RHEA:75103"/>
        <dbReference type="Rhea" id="RHEA-COMP:11964"/>
        <dbReference type="Rhea" id="RHEA-COMP:11965"/>
        <dbReference type="ChEBI" id="CHEBI:15377"/>
        <dbReference type="ChEBI" id="CHEBI:15378"/>
        <dbReference type="ChEBI" id="CHEBI:15379"/>
        <dbReference type="ChEBI" id="CHEBI:16521"/>
        <dbReference type="ChEBI" id="CHEBI:57618"/>
        <dbReference type="ChEBI" id="CHEBI:58210"/>
        <dbReference type="ChEBI" id="CHEBI:166806"/>
    </reaction>
    <physiologicalReaction direction="left-to-right" evidence="17">
        <dbReference type="Rhea" id="RHEA:75104"/>
    </physiologicalReaction>
</comment>
<comment type="catalytic activity">
    <reaction evidence="17">
        <text>32-hydroxylanosterol + reduced [NADPH--hemoprotein reductase] + O2 = 32-oxolanosterol + oxidized [NADPH--hemoprotein reductase] + 2 H2O + H(+)</text>
        <dbReference type="Rhea" id="RHEA:75107"/>
        <dbReference type="Rhea" id="RHEA-COMP:11964"/>
        <dbReference type="Rhea" id="RHEA-COMP:11965"/>
        <dbReference type="ChEBI" id="CHEBI:15377"/>
        <dbReference type="ChEBI" id="CHEBI:15378"/>
        <dbReference type="ChEBI" id="CHEBI:15379"/>
        <dbReference type="ChEBI" id="CHEBI:57618"/>
        <dbReference type="ChEBI" id="CHEBI:58210"/>
        <dbReference type="ChEBI" id="CHEBI:166681"/>
        <dbReference type="ChEBI" id="CHEBI:166806"/>
    </reaction>
    <physiologicalReaction direction="left-to-right" evidence="17">
        <dbReference type="Rhea" id="RHEA:75108"/>
    </physiologicalReaction>
</comment>
<comment type="catalytic activity">
    <reaction evidence="17">
        <text>32-oxolanosterol + reduced [NADPH--hemoprotein reductase] + O2 = 4,4-dimethyl-5alpha-cholesta-8,14,24-trien-3beta-ol + formate + oxidized [NADPH--hemoprotein reductase] + H2O + 2 H(+)</text>
        <dbReference type="Rhea" id="RHEA:75111"/>
        <dbReference type="Rhea" id="RHEA-COMP:11964"/>
        <dbReference type="Rhea" id="RHEA-COMP:11965"/>
        <dbReference type="ChEBI" id="CHEBI:15377"/>
        <dbReference type="ChEBI" id="CHEBI:15378"/>
        <dbReference type="ChEBI" id="CHEBI:15379"/>
        <dbReference type="ChEBI" id="CHEBI:15740"/>
        <dbReference type="ChEBI" id="CHEBI:17813"/>
        <dbReference type="ChEBI" id="CHEBI:57618"/>
        <dbReference type="ChEBI" id="CHEBI:58210"/>
        <dbReference type="ChEBI" id="CHEBI:166681"/>
    </reaction>
    <physiologicalReaction direction="left-to-right" evidence="17">
        <dbReference type="Rhea" id="RHEA:75112"/>
    </physiologicalReaction>
</comment>
<comment type="cofactor">
    <cofactor evidence="7">
        <name>heme</name>
        <dbReference type="ChEBI" id="CHEBI:30413"/>
    </cofactor>
</comment>
<comment type="biophysicochemical properties">
    <kinetics>
        <KM evidence="6">6.7 uM for lanosterol</KM>
        <KM evidence="6">8.7 uM for eburicol</KM>
        <Vmax evidence="6">11.8 nmol/min/nmol enzyme with lanosterol</Vmax>
        <Vmax evidence="6">16.7 nmol/min/nmol enzyme with eburicol</Vmax>
    </kinetics>
</comment>
<comment type="pathway">
    <text evidence="1 9">Steroid biosynthesis; zymosterol biosynthesis; zymosterol from lanosterol: step 1/6.</text>
</comment>
<comment type="subunit">
    <text evidence="3">Interacts with ERG28.</text>
</comment>
<comment type="interaction">
    <interactant intactId="EBI-5127">
        <id>P10614</id>
    </interactant>
    <interactant intactId="EBI-6506">
        <id>P53045</id>
        <label>ERG25</label>
    </interactant>
    <organismsDiffer>false</organismsDiffer>
    <experiments>3</experiments>
</comment>
<comment type="subcellular location">
    <subcellularLocation>
        <location evidence="16">Endoplasmic reticulum membrane</location>
        <topology evidence="4 7">Single-pass membrane protein</topology>
    </subcellularLocation>
</comment>
<comment type="induction">
    <text evidence="5">Expression is increased during growth on glucose, in the presence of heme, and during oxygen limiting growth conditions and, unexpectedly, during anaerobic growth (PubMed:1730736). Two upstream activating sequences, UASl and UASZ, and an upstream repressor element, URS1, plus a second possible or cryptic repressor element, URSP, are present in promoter (PubMed:1730736). HAP1 participates in activation from UASl but not from UAS2, whereas the ROXl repressor represses expressio of ERG11 (PubMed:1730736).</text>
</comment>
<comment type="miscellaneous">
    <text evidence="16">It is the main target for antifungal compounds of the triazole family like ketoconazole which inhibits by coordinating the iron atom at the sixth ligand position.</text>
</comment>
<comment type="miscellaneous">
    <text evidence="2">Present with 73200 molecules/cell in log phase SD medium.</text>
</comment>
<comment type="similarity">
    <text evidence="16">Belongs to the cytochrome P450 family.</text>
</comment>
<keyword id="KW-0002">3D-structure</keyword>
<keyword id="KW-0256">Endoplasmic reticulum</keyword>
<keyword id="KW-0349">Heme</keyword>
<keyword id="KW-0408">Iron</keyword>
<keyword id="KW-1017">Isopeptide bond</keyword>
<keyword id="KW-0444">Lipid biosynthesis</keyword>
<keyword id="KW-0443">Lipid metabolism</keyword>
<keyword id="KW-0472">Membrane</keyword>
<keyword id="KW-0479">Metal-binding</keyword>
<keyword id="KW-0503">Monooxygenase</keyword>
<keyword id="KW-0560">Oxidoreductase</keyword>
<keyword id="KW-0597">Phosphoprotein</keyword>
<keyword id="KW-1185">Reference proteome</keyword>
<keyword id="KW-0752">Steroid biosynthesis</keyword>
<keyword id="KW-0753">Steroid metabolism</keyword>
<keyword id="KW-0756">Sterol biosynthesis</keyword>
<keyword id="KW-1207">Sterol metabolism</keyword>
<keyword id="KW-0812">Transmembrane</keyword>
<keyword id="KW-1133">Transmembrane helix</keyword>
<keyword id="KW-0832">Ubl conjugation</keyword>
<proteinExistence type="evidence at protein level"/>
<accession>P10614</accession>
<accession>D3DKV1</accession>
<gene>
    <name evidence="10" type="primary">ERG11</name>
    <name type="synonym">CYP51</name>
    <name type="ordered locus">YHR007C</name>
</gene>
<dbReference type="EC" id="1.14.14.154" evidence="1 9 17"/>
<dbReference type="EMBL" id="M18109">
    <property type="protein sequence ID" value="AAA34379.1"/>
    <property type="molecule type" value="Genomic_DNA"/>
</dbReference>
<dbReference type="EMBL" id="M21483">
    <property type="protein sequence ID" value="AAA34546.1"/>
    <property type="molecule type" value="Genomic_DNA"/>
</dbReference>
<dbReference type="EMBL" id="M21484">
    <property type="protein sequence ID" value="AAA34547.1"/>
    <property type="molecule type" value="Genomic_DNA"/>
</dbReference>
<dbReference type="EMBL" id="M15663">
    <property type="protein sequence ID" value="AAA34837.2"/>
    <property type="molecule type" value="Genomic_DNA"/>
</dbReference>
<dbReference type="EMBL" id="U10555">
    <property type="protein sequence ID" value="AAB68433.1"/>
    <property type="molecule type" value="Genomic_DNA"/>
</dbReference>
<dbReference type="EMBL" id="BK006934">
    <property type="protein sequence ID" value="DAA06695.1"/>
    <property type="molecule type" value="Genomic_DNA"/>
</dbReference>
<dbReference type="PIR" id="A27491">
    <property type="entry name" value="A27491"/>
</dbReference>
<dbReference type="RefSeq" id="NP_011871.1">
    <property type="nucleotide sequence ID" value="NM_001179137.1"/>
</dbReference>
<dbReference type="PDB" id="4LXJ">
    <property type="method" value="X-ray"/>
    <property type="resolution" value="1.90 A"/>
    <property type="chains" value="A=1-530"/>
</dbReference>
<dbReference type="PDB" id="5EQB">
    <property type="method" value="X-ray"/>
    <property type="resolution" value="2.19 A"/>
    <property type="chains" value="A=1-530"/>
</dbReference>
<dbReference type="PDB" id="7RY8">
    <property type="method" value="X-ray"/>
    <property type="resolution" value="1.98 A"/>
    <property type="chains" value="A=1-530"/>
</dbReference>
<dbReference type="PDB" id="7RY9">
    <property type="method" value="X-ray"/>
    <property type="resolution" value="2.40 A"/>
    <property type="chains" value="A=1-530"/>
</dbReference>
<dbReference type="PDB" id="7RYA">
    <property type="method" value="X-ray"/>
    <property type="resolution" value="2.10 A"/>
    <property type="chains" value="A=1-530"/>
</dbReference>
<dbReference type="PDB" id="7RYB">
    <property type="method" value="X-ray"/>
    <property type="resolution" value="2.90 A"/>
    <property type="chains" value="A=1-530"/>
</dbReference>
<dbReference type="PDB" id="7RYX">
    <property type="method" value="X-ray"/>
    <property type="resolution" value="2.10 A"/>
    <property type="chains" value="A=1-530"/>
</dbReference>
<dbReference type="PDB" id="8DL4">
    <property type="method" value="X-ray"/>
    <property type="resolution" value="1.91 A"/>
    <property type="chains" value="A=1-530"/>
</dbReference>
<dbReference type="PDB" id="8VK6">
    <property type="method" value="X-ray"/>
    <property type="resolution" value="1.89 A"/>
    <property type="chains" value="A=1-530"/>
</dbReference>
<dbReference type="PDBsum" id="4LXJ"/>
<dbReference type="PDBsum" id="5EQB"/>
<dbReference type="PDBsum" id="7RY8"/>
<dbReference type="PDBsum" id="7RY9"/>
<dbReference type="PDBsum" id="7RYA"/>
<dbReference type="PDBsum" id="7RYB"/>
<dbReference type="PDBsum" id="7RYX"/>
<dbReference type="PDBsum" id="8DL4"/>
<dbReference type="PDBsum" id="8VK6"/>
<dbReference type="SMR" id="P10614"/>
<dbReference type="BioGRID" id="36434">
    <property type="interactions" value="508"/>
</dbReference>
<dbReference type="DIP" id="DIP-7886N"/>
<dbReference type="FunCoup" id="P10614">
    <property type="interactions" value="736"/>
</dbReference>
<dbReference type="IntAct" id="P10614">
    <property type="interactions" value="79"/>
</dbReference>
<dbReference type="MINT" id="P10614"/>
<dbReference type="STRING" id="4932.YHR007C"/>
<dbReference type="DrugBank" id="DB06890">
    <property type="generic name" value="(2R)-2-PHENYL-N-PYRIDIN-4-YLBUTANAMIDE"/>
</dbReference>
<dbReference type="DrugBank" id="DB07568">
    <property type="generic name" value="(2S)-2-[(2,1,3-BENZOTHIADIAZOL-4-YLSULFONYL)AMINO]-2-PHENYL-N-PYRIDIN-4-YLACETAMIDE"/>
</dbReference>
<dbReference type="DrugBank" id="DB07572">
    <property type="generic name" value="3-{[(4-methylphenyl)sulfonyl]amino}propyl pyridin-4-ylcarbamate"/>
</dbReference>
<dbReference type="DrugBank" id="DB07635">
    <property type="generic name" value="4,4'-Dihydroxybenzophenone"/>
</dbReference>
<dbReference type="DrugBank" id="DB07569">
    <property type="generic name" value="CIS-4-METHYL-N-[(1S)-3-(METHYLSULFANYL)-1-(PYRIDIN-4-YLCARBAMOYL)PROPYL]CYCLOHEXANECARBOXAMIDE"/>
</dbReference>
<dbReference type="DrugBank" id="DB07560">
    <property type="generic name" value="N-[(1S)-2-methyl-1-(pyridin-4-ylcarbamoyl)propyl]cyclohexanecarboxamide"/>
</dbReference>
<dbReference type="iPTMnet" id="P10614"/>
<dbReference type="PaxDb" id="4932-YHR007C"/>
<dbReference type="PeptideAtlas" id="P10614"/>
<dbReference type="TopDownProteomics" id="P10614"/>
<dbReference type="EnsemblFungi" id="YHR007C_mRNA">
    <property type="protein sequence ID" value="YHR007C"/>
    <property type="gene ID" value="YHR007C"/>
</dbReference>
<dbReference type="GeneID" id="856398"/>
<dbReference type="KEGG" id="sce:YHR007C"/>
<dbReference type="AGR" id="SGD:S000001049"/>
<dbReference type="SGD" id="S000001049">
    <property type="gene designation" value="ERG11"/>
</dbReference>
<dbReference type="VEuPathDB" id="FungiDB:YHR007C"/>
<dbReference type="eggNOG" id="KOG0684">
    <property type="taxonomic scope" value="Eukaryota"/>
</dbReference>
<dbReference type="GeneTree" id="ENSGT00930000151026"/>
<dbReference type="HOGENOM" id="CLU_001570_15_0_1"/>
<dbReference type="InParanoid" id="P10614"/>
<dbReference type="OMA" id="HWFPFVG"/>
<dbReference type="OrthoDB" id="1055148at2759"/>
<dbReference type="BioCyc" id="MetaCyc:YHR007C-MONOMER"/>
<dbReference type="BioCyc" id="YEAST:YHR007C-MONOMER"/>
<dbReference type="BRENDA" id="1.14.14.154">
    <property type="organism ID" value="984"/>
</dbReference>
<dbReference type="Reactome" id="R-SCE-191273">
    <property type="pathway name" value="Cholesterol biosynthesis"/>
</dbReference>
<dbReference type="Reactome" id="R-SCE-211976">
    <property type="pathway name" value="Endogenous sterols"/>
</dbReference>
<dbReference type="UniPathway" id="UPA00770">
    <property type="reaction ID" value="UER00754"/>
</dbReference>
<dbReference type="BioGRID-ORCS" id="856398">
    <property type="hits" value="0 hits in 10 CRISPR screens"/>
</dbReference>
<dbReference type="EvolutionaryTrace" id="P10614"/>
<dbReference type="PRO" id="PR:P10614"/>
<dbReference type="Proteomes" id="UP000002311">
    <property type="component" value="Chromosome VIII"/>
</dbReference>
<dbReference type="RNAct" id="P10614">
    <property type="molecule type" value="protein"/>
</dbReference>
<dbReference type="GO" id="GO:0005783">
    <property type="term" value="C:endoplasmic reticulum"/>
    <property type="evidence" value="ECO:0000314"/>
    <property type="project" value="SGD"/>
</dbReference>
<dbReference type="GO" id="GO:0005789">
    <property type="term" value="C:endoplasmic reticulum membrane"/>
    <property type="evidence" value="ECO:0007669"/>
    <property type="project" value="UniProtKB-SubCell"/>
</dbReference>
<dbReference type="GO" id="GO:0020037">
    <property type="term" value="F:heme binding"/>
    <property type="evidence" value="ECO:0007669"/>
    <property type="project" value="InterPro"/>
</dbReference>
<dbReference type="GO" id="GO:0005506">
    <property type="term" value="F:iron ion binding"/>
    <property type="evidence" value="ECO:0007669"/>
    <property type="project" value="InterPro"/>
</dbReference>
<dbReference type="GO" id="GO:0016491">
    <property type="term" value="F:oxidoreductase activity"/>
    <property type="evidence" value="ECO:0000318"/>
    <property type="project" value="GO_Central"/>
</dbReference>
<dbReference type="GO" id="GO:0008398">
    <property type="term" value="F:sterol 14-demethylase activity"/>
    <property type="evidence" value="ECO:0000314"/>
    <property type="project" value="UniProt"/>
</dbReference>
<dbReference type="GO" id="GO:0006696">
    <property type="term" value="P:ergosterol biosynthetic process"/>
    <property type="evidence" value="ECO:0000314"/>
    <property type="project" value="UniProt"/>
</dbReference>
<dbReference type="CDD" id="cd11042">
    <property type="entry name" value="CYP51-like"/>
    <property type="match status" value="1"/>
</dbReference>
<dbReference type="FunFam" id="1.10.630.10:FF:000033">
    <property type="entry name" value="14-alpha sterol demethylase"/>
    <property type="match status" value="1"/>
</dbReference>
<dbReference type="Gene3D" id="1.10.630.10">
    <property type="entry name" value="Cytochrome P450"/>
    <property type="match status" value="1"/>
</dbReference>
<dbReference type="InterPro" id="IPR050529">
    <property type="entry name" value="CYP450_sterol_14alpha_dmase"/>
</dbReference>
<dbReference type="InterPro" id="IPR001128">
    <property type="entry name" value="Cyt_P450"/>
</dbReference>
<dbReference type="InterPro" id="IPR017972">
    <property type="entry name" value="Cyt_P450_CS"/>
</dbReference>
<dbReference type="InterPro" id="IPR002403">
    <property type="entry name" value="Cyt_P450_E_grp-IV"/>
</dbReference>
<dbReference type="InterPro" id="IPR036396">
    <property type="entry name" value="Cyt_P450_sf"/>
</dbReference>
<dbReference type="PANTHER" id="PTHR24304:SF2">
    <property type="entry name" value="24-HYDROXYCHOLESTEROL 7-ALPHA-HYDROXYLASE"/>
    <property type="match status" value="1"/>
</dbReference>
<dbReference type="PANTHER" id="PTHR24304">
    <property type="entry name" value="CYTOCHROME P450 FAMILY 7"/>
    <property type="match status" value="1"/>
</dbReference>
<dbReference type="Pfam" id="PF00067">
    <property type="entry name" value="p450"/>
    <property type="match status" value="1"/>
</dbReference>
<dbReference type="PRINTS" id="PR00465">
    <property type="entry name" value="EP450IV"/>
</dbReference>
<dbReference type="PRINTS" id="PR00385">
    <property type="entry name" value="P450"/>
</dbReference>
<dbReference type="SUPFAM" id="SSF48264">
    <property type="entry name" value="Cytochrome P450"/>
    <property type="match status" value="1"/>
</dbReference>
<dbReference type="PROSITE" id="PS00086">
    <property type="entry name" value="CYTOCHROME_P450"/>
    <property type="match status" value="1"/>
</dbReference>